<comment type="function">
    <text>Binds non-covalently to a chromophore which is the cytotoxic and mutagenic component of the antibiotic. The chromophore binds to DNA as a weak intercalator and causes single- and double-strand breaks.</text>
</comment>
<comment type="similarity">
    <text evidence="3">Belongs to the neocarzinostatin family.</text>
</comment>
<evidence type="ECO:0000269" key="1">
    <source>
    </source>
</evidence>
<evidence type="ECO:0000269" key="2">
    <source>
    </source>
</evidence>
<evidence type="ECO:0000305" key="3"/>
<evidence type="ECO:0007829" key="4">
    <source>
        <dbReference type="PDB" id="2MCM"/>
    </source>
</evidence>
<accession>P01549</accession>
<dbReference type="EMBL" id="D90006">
    <property type="protein sequence ID" value="BAA14059.1"/>
    <property type="molecule type" value="Genomic_DNA"/>
</dbReference>
<dbReference type="PIR" id="A45766">
    <property type="entry name" value="YMSMCM"/>
</dbReference>
<dbReference type="PDB" id="2MCM">
    <property type="method" value="X-ray"/>
    <property type="resolution" value="1.50 A"/>
    <property type="chains" value="A=33-144"/>
</dbReference>
<dbReference type="PDBsum" id="2MCM"/>
<dbReference type="SMR" id="P01549"/>
<dbReference type="EvolutionaryTrace" id="P01549"/>
<dbReference type="GO" id="GO:0003677">
    <property type="term" value="F:DNA binding"/>
    <property type="evidence" value="ECO:0007669"/>
    <property type="project" value="UniProtKB-KW"/>
</dbReference>
<dbReference type="GO" id="GO:0042742">
    <property type="term" value="P:defense response to bacterium"/>
    <property type="evidence" value="ECO:0007669"/>
    <property type="project" value="UniProtKB-KW"/>
</dbReference>
<dbReference type="Gene3D" id="2.60.40.230">
    <property type="entry name" value="Neocarzinostatin-like"/>
    <property type="match status" value="1"/>
</dbReference>
<dbReference type="InterPro" id="IPR027273">
    <property type="entry name" value="Neocarzinostatin-like"/>
</dbReference>
<dbReference type="InterPro" id="IPR002186">
    <property type="entry name" value="Neocarzinostatin_fam"/>
</dbReference>
<dbReference type="NCBIfam" id="NF040680">
    <property type="entry name" value="chromo_anti"/>
    <property type="match status" value="1"/>
</dbReference>
<dbReference type="Pfam" id="PF00960">
    <property type="entry name" value="Neocarzinostat"/>
    <property type="match status" value="1"/>
</dbReference>
<dbReference type="PRINTS" id="PR01885">
    <property type="entry name" value="MACROMOMYCIN"/>
</dbReference>
<dbReference type="SUPFAM" id="SSF49319">
    <property type="entry name" value="Actinoxanthin-like"/>
    <property type="match status" value="1"/>
</dbReference>
<name>MACM_STRMA</name>
<protein>
    <recommendedName>
        <fullName>Macromomycin</fullName>
        <shortName>MCR</shortName>
    </recommendedName>
    <alternativeName>
        <fullName>Auromomycin apoprotein</fullName>
    </alternativeName>
</protein>
<feature type="signal peptide" evidence="1 2">
    <location>
        <begin position="1"/>
        <end position="32"/>
    </location>
</feature>
<feature type="chain" id="PRO_0000019460" description="Macromomycin">
    <location>
        <begin position="33"/>
        <end position="144"/>
    </location>
</feature>
<feature type="disulfide bond" evidence="2">
    <location>
        <begin position="68"/>
        <end position="78"/>
    </location>
</feature>
<feature type="disulfide bond" evidence="2">
    <location>
        <begin position="120"/>
        <end position="125"/>
    </location>
</feature>
<feature type="sequence conflict" description="In Ref. 3; AA sequence." evidence="3" ref="3">
    <original>Q</original>
    <variation>E</variation>
    <location>
        <position position="48"/>
    </location>
</feature>
<feature type="sequence conflict" description="In Ref. 3; AA sequence." evidence="3" ref="3">
    <location>
        <position position="65"/>
    </location>
</feature>
<feature type="sequence conflict" description="In Ref. 3; AA sequence." evidence="3" ref="3">
    <original>QC</original>
    <variation>ES</variation>
    <location>
        <begin position="67"/>
        <end position="68"/>
    </location>
</feature>
<feature type="sequence conflict" description="In Ref. 3; AA sequence." evidence="3" ref="3">
    <original>V</original>
    <variation>A</variation>
    <location>
        <position position="71"/>
    </location>
</feature>
<feature type="sequence conflict" description="In Ref. 3; AA sequence." evidence="3" ref="3">
    <original>C</original>
    <variation>P</variation>
    <location>
        <position position="78"/>
    </location>
</feature>
<feature type="sequence conflict" description="In Ref. 2; AA sequence." evidence="3" ref="2">
    <original>N</original>
    <variation>D</variation>
    <location>
        <position position="111"/>
    </location>
</feature>
<feature type="strand" evidence="4">
    <location>
        <begin position="35"/>
        <end position="40"/>
    </location>
</feature>
<feature type="strand" evidence="4">
    <location>
        <begin position="42"/>
        <end position="44"/>
    </location>
</feature>
<feature type="strand" evidence="4">
    <location>
        <begin position="48"/>
        <end position="56"/>
    </location>
</feature>
<feature type="strand" evidence="4">
    <location>
        <begin position="62"/>
        <end position="72"/>
    </location>
</feature>
<feature type="strand" evidence="4">
    <location>
        <begin position="75"/>
        <end position="78"/>
    </location>
</feature>
<feature type="turn" evidence="4">
    <location>
        <begin position="80"/>
        <end position="82"/>
    </location>
</feature>
<feature type="strand" evidence="4">
    <location>
        <begin position="84"/>
        <end position="87"/>
    </location>
</feature>
<feature type="strand" evidence="4">
    <location>
        <begin position="94"/>
        <end position="100"/>
    </location>
</feature>
<feature type="strand" evidence="4">
    <location>
        <begin position="102"/>
        <end position="108"/>
    </location>
</feature>
<feature type="turn" evidence="4">
    <location>
        <begin position="109"/>
        <end position="112"/>
    </location>
</feature>
<feature type="strand" evidence="4">
    <location>
        <begin position="113"/>
        <end position="119"/>
    </location>
</feature>
<feature type="turn" evidence="4">
    <location>
        <begin position="120"/>
        <end position="122"/>
    </location>
</feature>
<feature type="strand" evidence="4">
    <location>
        <begin position="125"/>
        <end position="130"/>
    </location>
</feature>
<feature type="strand" evidence="4">
    <location>
        <begin position="136"/>
        <end position="141"/>
    </location>
</feature>
<organism>
    <name type="scientific">Streptomyces macromomyceticus</name>
    <dbReference type="NCBI Taxonomy" id="1917"/>
    <lineage>
        <taxon>Bacteria</taxon>
        <taxon>Bacillati</taxon>
        <taxon>Actinomycetota</taxon>
        <taxon>Actinomycetes</taxon>
        <taxon>Kitasatosporales</taxon>
        <taxon>Streptomycetaceae</taxon>
        <taxon>Streptomyces</taxon>
    </lineage>
</organism>
<reference key="1">
    <citation type="journal article" date="1989" name="J. Antibiot.">
        <title>Nucleotide sequence of the macromomycin apoprotein gene and its expression in Streptomyces macromomyceticus.</title>
        <authorList>
            <person name="Sakata N."/>
            <person name="Kanbe T."/>
            <person name="Tanabe M."/>
            <person name="Hayashi H."/>
            <person name="Hori M."/>
            <person name="Hotta K."/>
            <person name="Hamada M."/>
        </authorList>
    </citation>
    <scope>NUCLEOTIDE SEQUENCE [GENOMIC DNA]</scope>
    <source>
        <strain>M480-M1</strain>
    </source>
</reference>
<reference key="2">
    <citation type="journal article" date="1983" name="J. Biol. Chem.">
        <title>Primary structure of macromomycin, an antitumor antibiotic protein.</title>
        <authorList>
            <person name="Samy T.S.A."/>
            <person name="Hahm K.-S."/>
            <person name="Modest E.J."/>
            <person name="Lampman G.W."/>
            <person name="Keutmann H.T."/>
            <person name="Umezawa H."/>
            <person name="Herlihy W.C."/>
            <person name="Gibson B.W."/>
            <person name="Carr S.A."/>
            <person name="Biemann K."/>
        </authorList>
    </citation>
    <scope>PROTEIN SEQUENCE OF 33-144</scope>
</reference>
<reference key="3">
    <citation type="journal article" date="1979" name="Biochem. Biophys. Res. Commun.">
        <title>Amino terminal amino acid sequence of macromomycin, a protein antitumor antibiotic.</title>
        <authorList>
            <person name="Sawyer T.H."/>
            <person name="Guetzow K."/>
            <person name="Olson M.O.J."/>
            <person name="Busch H."/>
            <person name="Prestayko A.W."/>
            <person name="Crooke S.T."/>
        </authorList>
    </citation>
    <scope>PROTEIN SEQUENCE OF 33-78</scope>
</reference>
<reference key="4">
    <citation type="journal article" date="1989" name="Proc. Natl. Acad. Sci. U.S.A.">
        <title>Crystal structure analysis of auromomycin apoprotein (macromomycin) shows importance of protein side chains to chromophore binding selectivity.</title>
        <authorList>
            <person name="van Roey P."/>
            <person name="Beerman T.A."/>
        </authorList>
    </citation>
    <scope>X-RAY CRYSTALLOGRAPHY (1.6 ANGSTROMS)</scope>
</reference>
<sequence>MLQNTSRFLARAGATVGVAAGLAFSLPADRDGAPGVTVTPATGLSNGQTVTVSATGLTPGTVYHVGQCAVVEPGVIGCDATTSTDVTADAAGKITAQLKVHSSFQAVVGANGTPWGTVNCKVVSCSAGLGSDSGEGAAQAITFA</sequence>
<keyword id="KW-0002">3D-structure</keyword>
<keyword id="KW-0044">Antibiotic</keyword>
<keyword id="KW-0929">Antimicrobial</keyword>
<keyword id="KW-0903">Direct protein sequencing</keyword>
<keyword id="KW-1015">Disulfide bond</keyword>
<keyword id="KW-0238">DNA-binding</keyword>
<keyword id="KW-0732">Signal</keyword>
<proteinExistence type="evidence at protein level"/>